<comment type="function">
    <text evidence="1">The beta subunit is responsible for the synthesis of L-tryptophan from indole and L-serine.</text>
</comment>
<comment type="catalytic activity">
    <reaction evidence="1">
        <text>(1S,2R)-1-C-(indol-3-yl)glycerol 3-phosphate + L-serine = D-glyceraldehyde 3-phosphate + L-tryptophan + H2O</text>
        <dbReference type="Rhea" id="RHEA:10532"/>
        <dbReference type="ChEBI" id="CHEBI:15377"/>
        <dbReference type="ChEBI" id="CHEBI:33384"/>
        <dbReference type="ChEBI" id="CHEBI:57912"/>
        <dbReference type="ChEBI" id="CHEBI:58866"/>
        <dbReference type="ChEBI" id="CHEBI:59776"/>
        <dbReference type="EC" id="4.2.1.20"/>
    </reaction>
</comment>
<comment type="cofactor">
    <cofactor evidence="1">
        <name>pyridoxal 5'-phosphate</name>
        <dbReference type="ChEBI" id="CHEBI:597326"/>
    </cofactor>
</comment>
<comment type="pathway">
    <text evidence="1">Amino-acid biosynthesis; L-tryptophan biosynthesis; L-tryptophan from chorismate: step 5/5.</text>
</comment>
<comment type="subunit">
    <text evidence="1">Tetramer of two alpha and two beta chains.</text>
</comment>
<comment type="similarity">
    <text evidence="1">Belongs to the TrpB family.</text>
</comment>
<sequence>MVENIQTEADAFGFFGNYGGQYVPETLMPAIQELKQAYQDAKNDPQFQIELDDYLKDYVGRETPLTYAKSYSELLGGAKIYLKREDLNHTGAHKINNALGQALLAKRMGKNKLVAETGAGQHGVASATVAALFDMELVVFMGEEDIKRQSLNVFRMELLGAKVESVTEGQGTLSDAVNKALQYWVSHVDDTHYLLGSALGPDPFPTIVRDFQKIIGQEIKAQVHEKEGQLPDAIVACVGGGSNAIGTFYPFVKDDVKLYGVEAAGDGIDSDKHALAINKGKEGVLHGTKMYLIQDDDGQIQLAHSISAGLDYPGVGPEHSYYHDIGRVKYATASDKQAMDALVRFTKAEGIIPAIESAHALSYVETLAPTMRNDEILVVTVSGRGDKDMETIRNYMKQEGDTHA</sequence>
<protein>
    <recommendedName>
        <fullName evidence="1">Tryptophan synthase beta chain</fullName>
        <ecNumber evidence="1">4.2.1.20</ecNumber>
    </recommendedName>
</protein>
<accession>Q49XH8</accession>
<organism>
    <name type="scientific">Staphylococcus saprophyticus subsp. saprophyticus (strain ATCC 15305 / DSM 20229 / NCIMB 8711 / NCTC 7292 / S-41)</name>
    <dbReference type="NCBI Taxonomy" id="342451"/>
    <lineage>
        <taxon>Bacteria</taxon>
        <taxon>Bacillati</taxon>
        <taxon>Bacillota</taxon>
        <taxon>Bacilli</taxon>
        <taxon>Bacillales</taxon>
        <taxon>Staphylococcaceae</taxon>
        <taxon>Staphylococcus</taxon>
    </lineage>
</organism>
<feature type="chain" id="PRO_1000018408" description="Tryptophan synthase beta chain">
    <location>
        <begin position="1"/>
        <end position="404"/>
    </location>
</feature>
<feature type="modified residue" description="N6-(pyridoxal phosphate)lysine" evidence="1">
    <location>
        <position position="94"/>
    </location>
</feature>
<keyword id="KW-0028">Amino-acid biosynthesis</keyword>
<keyword id="KW-0057">Aromatic amino acid biosynthesis</keyword>
<keyword id="KW-0456">Lyase</keyword>
<keyword id="KW-0663">Pyridoxal phosphate</keyword>
<keyword id="KW-1185">Reference proteome</keyword>
<keyword id="KW-0822">Tryptophan biosynthesis</keyword>
<evidence type="ECO:0000255" key="1">
    <source>
        <dbReference type="HAMAP-Rule" id="MF_00133"/>
    </source>
</evidence>
<reference key="1">
    <citation type="journal article" date="2005" name="Proc. Natl. Acad. Sci. U.S.A.">
        <title>Whole genome sequence of Staphylococcus saprophyticus reveals the pathogenesis of uncomplicated urinary tract infection.</title>
        <authorList>
            <person name="Kuroda M."/>
            <person name="Yamashita A."/>
            <person name="Hirakawa H."/>
            <person name="Kumano M."/>
            <person name="Morikawa K."/>
            <person name="Higashide M."/>
            <person name="Maruyama A."/>
            <person name="Inose Y."/>
            <person name="Matoba K."/>
            <person name="Toh H."/>
            <person name="Kuhara S."/>
            <person name="Hattori M."/>
            <person name="Ohta T."/>
        </authorList>
    </citation>
    <scope>NUCLEOTIDE SEQUENCE [LARGE SCALE GENOMIC DNA]</scope>
    <source>
        <strain>ATCC 15305 / DSM 20229 / NCIMB 8711 / NCTC 7292 / S-41</strain>
    </source>
</reference>
<gene>
    <name evidence="1" type="primary">trpB</name>
    <name type="ordered locus">SSP1374</name>
</gene>
<name>TRPB_STAS1</name>
<dbReference type="EC" id="4.2.1.20" evidence="1"/>
<dbReference type="EMBL" id="AP008934">
    <property type="protein sequence ID" value="BAE18519.1"/>
    <property type="molecule type" value="Genomic_DNA"/>
</dbReference>
<dbReference type="RefSeq" id="WP_011303150.1">
    <property type="nucleotide sequence ID" value="NZ_MTGA01000038.1"/>
</dbReference>
<dbReference type="SMR" id="Q49XH8"/>
<dbReference type="GeneID" id="3617102"/>
<dbReference type="KEGG" id="ssp:SSP1374"/>
<dbReference type="PATRIC" id="fig|342451.11.peg.1379"/>
<dbReference type="eggNOG" id="COG0133">
    <property type="taxonomic scope" value="Bacteria"/>
</dbReference>
<dbReference type="HOGENOM" id="CLU_016734_3_1_9"/>
<dbReference type="OrthoDB" id="9766131at2"/>
<dbReference type="UniPathway" id="UPA00035">
    <property type="reaction ID" value="UER00044"/>
</dbReference>
<dbReference type="Proteomes" id="UP000006371">
    <property type="component" value="Chromosome"/>
</dbReference>
<dbReference type="GO" id="GO:0005737">
    <property type="term" value="C:cytoplasm"/>
    <property type="evidence" value="ECO:0007669"/>
    <property type="project" value="TreeGrafter"/>
</dbReference>
<dbReference type="GO" id="GO:0004834">
    <property type="term" value="F:tryptophan synthase activity"/>
    <property type="evidence" value="ECO:0007669"/>
    <property type="project" value="UniProtKB-UniRule"/>
</dbReference>
<dbReference type="CDD" id="cd06446">
    <property type="entry name" value="Trp-synth_B"/>
    <property type="match status" value="1"/>
</dbReference>
<dbReference type="FunFam" id="3.40.50.1100:FF:000001">
    <property type="entry name" value="Tryptophan synthase beta chain"/>
    <property type="match status" value="1"/>
</dbReference>
<dbReference type="FunFam" id="3.40.50.1100:FF:000004">
    <property type="entry name" value="Tryptophan synthase beta chain"/>
    <property type="match status" value="1"/>
</dbReference>
<dbReference type="Gene3D" id="3.40.50.1100">
    <property type="match status" value="2"/>
</dbReference>
<dbReference type="HAMAP" id="MF_00133">
    <property type="entry name" value="Trp_synth_beta"/>
    <property type="match status" value="1"/>
</dbReference>
<dbReference type="InterPro" id="IPR006653">
    <property type="entry name" value="Trp_synth_b_CS"/>
</dbReference>
<dbReference type="InterPro" id="IPR006654">
    <property type="entry name" value="Trp_synth_beta"/>
</dbReference>
<dbReference type="InterPro" id="IPR023026">
    <property type="entry name" value="Trp_synth_beta/beta-like"/>
</dbReference>
<dbReference type="InterPro" id="IPR001926">
    <property type="entry name" value="TrpB-like_PALP"/>
</dbReference>
<dbReference type="InterPro" id="IPR036052">
    <property type="entry name" value="TrpB-like_PALP_sf"/>
</dbReference>
<dbReference type="NCBIfam" id="TIGR00263">
    <property type="entry name" value="trpB"/>
    <property type="match status" value="1"/>
</dbReference>
<dbReference type="PANTHER" id="PTHR48077:SF3">
    <property type="entry name" value="TRYPTOPHAN SYNTHASE"/>
    <property type="match status" value="1"/>
</dbReference>
<dbReference type="PANTHER" id="PTHR48077">
    <property type="entry name" value="TRYPTOPHAN SYNTHASE-RELATED"/>
    <property type="match status" value="1"/>
</dbReference>
<dbReference type="Pfam" id="PF00291">
    <property type="entry name" value="PALP"/>
    <property type="match status" value="1"/>
</dbReference>
<dbReference type="PIRSF" id="PIRSF001413">
    <property type="entry name" value="Trp_syn_beta"/>
    <property type="match status" value="1"/>
</dbReference>
<dbReference type="SUPFAM" id="SSF53686">
    <property type="entry name" value="Tryptophan synthase beta subunit-like PLP-dependent enzymes"/>
    <property type="match status" value="1"/>
</dbReference>
<dbReference type="PROSITE" id="PS00168">
    <property type="entry name" value="TRP_SYNTHASE_BETA"/>
    <property type="match status" value="1"/>
</dbReference>
<proteinExistence type="inferred from homology"/>